<gene>
    <name type="primary">Dnajc17</name>
</gene>
<keyword id="KW-0143">Chaperone</keyword>
<keyword id="KW-0963">Cytoplasm</keyword>
<keyword id="KW-0488">Methylation</keyword>
<keyword id="KW-0539">Nucleus</keyword>
<keyword id="KW-1185">Reference proteome</keyword>
<keyword id="KW-0694">RNA-binding</keyword>
<keyword id="KW-0804">Transcription</keyword>
<keyword id="KW-0805">Transcription regulation</keyword>
<comment type="function">
    <text evidence="1">May negatively affect PAX8-induced thyroglobulin/TG transcription.</text>
</comment>
<comment type="subcellular location">
    <subcellularLocation>
        <location evidence="6">Cytoplasm</location>
    </subcellularLocation>
    <subcellularLocation>
        <location evidence="6">Nucleus</location>
    </subcellularLocation>
    <text evidence="6">Predominantly nuclear.</text>
</comment>
<organism>
    <name type="scientific">Rattus norvegicus</name>
    <name type="common">Rat</name>
    <dbReference type="NCBI Taxonomy" id="10116"/>
    <lineage>
        <taxon>Eukaryota</taxon>
        <taxon>Metazoa</taxon>
        <taxon>Chordata</taxon>
        <taxon>Craniata</taxon>
        <taxon>Vertebrata</taxon>
        <taxon>Euteleostomi</taxon>
        <taxon>Mammalia</taxon>
        <taxon>Eutheria</taxon>
        <taxon>Euarchontoglires</taxon>
        <taxon>Glires</taxon>
        <taxon>Rodentia</taxon>
        <taxon>Myomorpha</taxon>
        <taxon>Muroidea</taxon>
        <taxon>Muridae</taxon>
        <taxon>Murinae</taxon>
        <taxon>Rattus</taxon>
    </lineage>
</organism>
<name>DJC17_RAT</name>
<evidence type="ECO:0000250" key="1">
    <source>
        <dbReference type="UniProtKB" id="Q91WT4"/>
    </source>
</evidence>
<evidence type="ECO:0000250" key="2">
    <source>
        <dbReference type="UniProtKB" id="Q9NVM6"/>
    </source>
</evidence>
<evidence type="ECO:0000255" key="3">
    <source>
        <dbReference type="PROSITE-ProRule" id="PRU00176"/>
    </source>
</evidence>
<evidence type="ECO:0000255" key="4">
    <source>
        <dbReference type="PROSITE-ProRule" id="PRU00286"/>
    </source>
</evidence>
<evidence type="ECO:0000256" key="5">
    <source>
        <dbReference type="SAM" id="MobiDB-lite"/>
    </source>
</evidence>
<evidence type="ECO:0000269" key="6">
    <source>
    </source>
</evidence>
<feature type="chain" id="PRO_0000436331" description="DnaJ homolog subfamily C member 17">
    <location>
        <begin position="1"/>
        <end position="303"/>
    </location>
</feature>
<feature type="domain" description="J" evidence="4">
    <location>
        <begin position="11"/>
        <end position="76"/>
    </location>
</feature>
<feature type="domain" description="RRM" evidence="3">
    <location>
        <begin position="178"/>
        <end position="249"/>
    </location>
</feature>
<feature type="region of interest" description="Disordered" evidence="5">
    <location>
        <begin position="78"/>
        <end position="124"/>
    </location>
</feature>
<feature type="region of interest" description="Disordered" evidence="5">
    <location>
        <begin position="150"/>
        <end position="170"/>
    </location>
</feature>
<feature type="compositionally biased region" description="Basic and acidic residues" evidence="5">
    <location>
        <begin position="78"/>
        <end position="106"/>
    </location>
</feature>
<feature type="compositionally biased region" description="Basic and acidic residues" evidence="5">
    <location>
        <begin position="150"/>
        <end position="166"/>
    </location>
</feature>
<feature type="modified residue" description="N6-methyllysine" evidence="2">
    <location>
        <position position="264"/>
    </location>
</feature>
<protein>
    <recommendedName>
        <fullName>DnaJ homolog subfamily C member 17</fullName>
    </recommendedName>
</protein>
<dbReference type="EMBL" id="AC111293">
    <property type="status" value="NOT_ANNOTATED_CDS"/>
    <property type="molecule type" value="Genomic_DNA"/>
</dbReference>
<dbReference type="RefSeq" id="NP_001178669.1">
    <property type="nucleotide sequence ID" value="NM_001191740.1"/>
</dbReference>
<dbReference type="SMR" id="D3ZSC8"/>
<dbReference type="FunCoup" id="D3ZSC8">
    <property type="interactions" value="3118"/>
</dbReference>
<dbReference type="STRING" id="10116.ENSRNOP00000016692"/>
<dbReference type="iPTMnet" id="D3ZSC8"/>
<dbReference type="PhosphoSitePlus" id="D3ZSC8"/>
<dbReference type="PaxDb" id="10116-ENSRNOP00000016692"/>
<dbReference type="PeptideAtlas" id="D3ZSC8"/>
<dbReference type="Ensembl" id="ENSRNOT00000016692.8">
    <property type="protein sequence ID" value="ENSRNOP00000016692.5"/>
    <property type="gene ID" value="ENSRNOG00000012368.8"/>
</dbReference>
<dbReference type="GeneID" id="311329"/>
<dbReference type="KEGG" id="rno:311329"/>
<dbReference type="UCSC" id="RGD:1308015">
    <property type="organism name" value="rat"/>
</dbReference>
<dbReference type="AGR" id="RGD:1308015"/>
<dbReference type="CTD" id="55192"/>
<dbReference type="RGD" id="1308015">
    <property type="gene designation" value="Dnajc17"/>
</dbReference>
<dbReference type="eggNOG" id="KOG0691">
    <property type="taxonomic scope" value="Eukaryota"/>
</dbReference>
<dbReference type="GeneTree" id="ENSGT00940000155132"/>
<dbReference type="HOGENOM" id="CLU_045732_1_0_1"/>
<dbReference type="InParanoid" id="D3ZSC8"/>
<dbReference type="OrthoDB" id="84258at9989"/>
<dbReference type="PhylomeDB" id="D3ZSC8"/>
<dbReference type="TreeFam" id="TF321770"/>
<dbReference type="PRO" id="PR:D3ZSC8"/>
<dbReference type="Proteomes" id="UP000002494">
    <property type="component" value="Chromosome 3"/>
</dbReference>
<dbReference type="Bgee" id="ENSRNOG00000012368">
    <property type="expression patterns" value="Expressed in spleen and 19 other cell types or tissues"/>
</dbReference>
<dbReference type="GO" id="GO:0005737">
    <property type="term" value="C:cytoplasm"/>
    <property type="evidence" value="ECO:0000314"/>
    <property type="project" value="MGI"/>
</dbReference>
<dbReference type="GO" id="GO:0005634">
    <property type="term" value="C:nucleus"/>
    <property type="evidence" value="ECO:0000314"/>
    <property type="project" value="MGI"/>
</dbReference>
<dbReference type="GO" id="GO:0005681">
    <property type="term" value="C:spliceosomal complex"/>
    <property type="evidence" value="ECO:0000318"/>
    <property type="project" value="GO_Central"/>
</dbReference>
<dbReference type="GO" id="GO:0003723">
    <property type="term" value="F:RNA binding"/>
    <property type="evidence" value="ECO:0007669"/>
    <property type="project" value="UniProtKB-KW"/>
</dbReference>
<dbReference type="GO" id="GO:0000122">
    <property type="term" value="P:negative regulation of transcription by RNA polymerase II"/>
    <property type="evidence" value="ECO:0000266"/>
    <property type="project" value="RGD"/>
</dbReference>
<dbReference type="GO" id="GO:0000390">
    <property type="term" value="P:spliceosomal complex disassembly"/>
    <property type="evidence" value="ECO:0000318"/>
    <property type="project" value="GO_Central"/>
</dbReference>
<dbReference type="CDD" id="cd06257">
    <property type="entry name" value="DnaJ"/>
    <property type="match status" value="1"/>
</dbReference>
<dbReference type="CDD" id="cd12429">
    <property type="entry name" value="RRM_DNAJC17"/>
    <property type="match status" value="1"/>
</dbReference>
<dbReference type="FunFam" id="1.10.287.110:FF:000059">
    <property type="entry name" value="dnaJ homolog subfamily C member 17"/>
    <property type="match status" value="1"/>
</dbReference>
<dbReference type="Gene3D" id="3.30.70.330">
    <property type="match status" value="1"/>
</dbReference>
<dbReference type="Gene3D" id="1.10.287.110">
    <property type="entry name" value="DnaJ domain"/>
    <property type="match status" value="1"/>
</dbReference>
<dbReference type="InterPro" id="IPR001623">
    <property type="entry name" value="DnaJ_domain"/>
</dbReference>
<dbReference type="InterPro" id="IPR034254">
    <property type="entry name" value="DNAJC17_RRM"/>
</dbReference>
<dbReference type="InterPro" id="IPR036869">
    <property type="entry name" value="J_dom_sf"/>
</dbReference>
<dbReference type="InterPro" id="IPR012677">
    <property type="entry name" value="Nucleotide-bd_a/b_plait_sf"/>
</dbReference>
<dbReference type="InterPro" id="IPR052094">
    <property type="entry name" value="Pre-mRNA-splicing_ERAD"/>
</dbReference>
<dbReference type="InterPro" id="IPR035979">
    <property type="entry name" value="RBD_domain_sf"/>
</dbReference>
<dbReference type="PANTHER" id="PTHR44313">
    <property type="entry name" value="DNAJ HOMOLOG SUBFAMILY C MEMBER 17"/>
    <property type="match status" value="1"/>
</dbReference>
<dbReference type="PANTHER" id="PTHR44313:SF1">
    <property type="entry name" value="DNAJ HOMOLOG SUBFAMILY C MEMBER 17"/>
    <property type="match status" value="1"/>
</dbReference>
<dbReference type="Pfam" id="PF00226">
    <property type="entry name" value="DnaJ"/>
    <property type="match status" value="1"/>
</dbReference>
<dbReference type="PRINTS" id="PR00625">
    <property type="entry name" value="JDOMAIN"/>
</dbReference>
<dbReference type="SMART" id="SM00271">
    <property type="entry name" value="DnaJ"/>
    <property type="match status" value="1"/>
</dbReference>
<dbReference type="SUPFAM" id="SSF46565">
    <property type="entry name" value="Chaperone J-domain"/>
    <property type="match status" value="1"/>
</dbReference>
<dbReference type="SUPFAM" id="SSF54928">
    <property type="entry name" value="RNA-binding domain, RBD"/>
    <property type="match status" value="1"/>
</dbReference>
<dbReference type="PROSITE" id="PS50076">
    <property type="entry name" value="DNAJ_2"/>
    <property type="match status" value="1"/>
</dbReference>
<reference key="1">
    <citation type="journal article" date="2004" name="Nature">
        <title>Genome sequence of the Brown Norway rat yields insights into mammalian evolution.</title>
        <authorList>
            <person name="Gibbs R.A."/>
            <person name="Weinstock G.M."/>
            <person name="Metzker M.L."/>
            <person name="Muzny D.M."/>
            <person name="Sodergren E.J."/>
            <person name="Scherer S."/>
            <person name="Scott G."/>
            <person name="Steffen D."/>
            <person name="Worley K.C."/>
            <person name="Burch P.E."/>
            <person name="Okwuonu G."/>
            <person name="Hines S."/>
            <person name="Lewis L."/>
            <person name="Deramo C."/>
            <person name="Delgado O."/>
            <person name="Dugan-Rocha S."/>
            <person name="Miner G."/>
            <person name="Morgan M."/>
            <person name="Hawes A."/>
            <person name="Gill R."/>
            <person name="Holt R.A."/>
            <person name="Adams M.D."/>
            <person name="Amanatides P.G."/>
            <person name="Baden-Tillson H."/>
            <person name="Barnstead M."/>
            <person name="Chin S."/>
            <person name="Evans C.A."/>
            <person name="Ferriera S."/>
            <person name="Fosler C."/>
            <person name="Glodek A."/>
            <person name="Gu Z."/>
            <person name="Jennings D."/>
            <person name="Kraft C.L."/>
            <person name="Nguyen T."/>
            <person name="Pfannkoch C.M."/>
            <person name="Sitter C."/>
            <person name="Sutton G.G."/>
            <person name="Venter J.C."/>
            <person name="Woodage T."/>
            <person name="Smith D."/>
            <person name="Lee H.-M."/>
            <person name="Gustafson E."/>
            <person name="Cahill P."/>
            <person name="Kana A."/>
            <person name="Doucette-Stamm L."/>
            <person name="Weinstock K."/>
            <person name="Fechtel K."/>
            <person name="Weiss R.B."/>
            <person name="Dunn D.M."/>
            <person name="Green E.D."/>
            <person name="Blakesley R.W."/>
            <person name="Bouffard G.G."/>
            <person name="De Jong P.J."/>
            <person name="Osoegawa K."/>
            <person name="Zhu B."/>
            <person name="Marra M."/>
            <person name="Schein J."/>
            <person name="Bosdet I."/>
            <person name="Fjell C."/>
            <person name="Jones S."/>
            <person name="Krzywinski M."/>
            <person name="Mathewson C."/>
            <person name="Siddiqui A."/>
            <person name="Wye N."/>
            <person name="McPherson J."/>
            <person name="Zhao S."/>
            <person name="Fraser C.M."/>
            <person name="Shetty J."/>
            <person name="Shatsman S."/>
            <person name="Geer K."/>
            <person name="Chen Y."/>
            <person name="Abramzon S."/>
            <person name="Nierman W.C."/>
            <person name="Havlak P.H."/>
            <person name="Chen R."/>
            <person name="Durbin K.J."/>
            <person name="Egan A."/>
            <person name="Ren Y."/>
            <person name="Song X.-Z."/>
            <person name="Li B."/>
            <person name="Liu Y."/>
            <person name="Qin X."/>
            <person name="Cawley S."/>
            <person name="Cooney A.J."/>
            <person name="D'Souza L.M."/>
            <person name="Martin K."/>
            <person name="Wu J.Q."/>
            <person name="Gonzalez-Garay M.L."/>
            <person name="Jackson A.R."/>
            <person name="Kalafus K.J."/>
            <person name="McLeod M.P."/>
            <person name="Milosavljevic A."/>
            <person name="Virk D."/>
            <person name="Volkov A."/>
            <person name="Wheeler D.A."/>
            <person name="Zhang Z."/>
            <person name="Bailey J.A."/>
            <person name="Eichler E.E."/>
            <person name="Tuzun E."/>
            <person name="Birney E."/>
            <person name="Mongin E."/>
            <person name="Ureta-Vidal A."/>
            <person name="Woodwark C."/>
            <person name="Zdobnov E."/>
            <person name="Bork P."/>
            <person name="Suyama M."/>
            <person name="Torrents D."/>
            <person name="Alexandersson M."/>
            <person name="Trask B.J."/>
            <person name="Young J.M."/>
            <person name="Huang H."/>
            <person name="Wang H."/>
            <person name="Xing H."/>
            <person name="Daniels S."/>
            <person name="Gietzen D."/>
            <person name="Schmidt J."/>
            <person name="Stevens K."/>
            <person name="Vitt U."/>
            <person name="Wingrove J."/>
            <person name="Camara F."/>
            <person name="Mar Alba M."/>
            <person name="Abril J.F."/>
            <person name="Guigo R."/>
            <person name="Smit A."/>
            <person name="Dubchak I."/>
            <person name="Rubin E.M."/>
            <person name="Couronne O."/>
            <person name="Poliakov A."/>
            <person name="Huebner N."/>
            <person name="Ganten D."/>
            <person name="Goesele C."/>
            <person name="Hummel O."/>
            <person name="Kreitler T."/>
            <person name="Lee Y.-A."/>
            <person name="Monti J."/>
            <person name="Schulz H."/>
            <person name="Zimdahl H."/>
            <person name="Himmelbauer H."/>
            <person name="Lehrach H."/>
            <person name="Jacob H.J."/>
            <person name="Bromberg S."/>
            <person name="Gullings-Handley J."/>
            <person name="Jensen-Seaman M.I."/>
            <person name="Kwitek A.E."/>
            <person name="Lazar J."/>
            <person name="Pasko D."/>
            <person name="Tonellato P.J."/>
            <person name="Twigger S."/>
            <person name="Ponting C.P."/>
            <person name="Duarte J.M."/>
            <person name="Rice S."/>
            <person name="Goodstadt L."/>
            <person name="Beatson S.A."/>
            <person name="Emes R.D."/>
            <person name="Winter E.E."/>
            <person name="Webber C."/>
            <person name="Brandt P."/>
            <person name="Nyakatura G."/>
            <person name="Adetobi M."/>
            <person name="Chiaromonte F."/>
            <person name="Elnitski L."/>
            <person name="Eswara P."/>
            <person name="Hardison R.C."/>
            <person name="Hou M."/>
            <person name="Kolbe D."/>
            <person name="Makova K."/>
            <person name="Miller W."/>
            <person name="Nekrutenko A."/>
            <person name="Riemer C."/>
            <person name="Schwartz S."/>
            <person name="Taylor J."/>
            <person name="Yang S."/>
            <person name="Zhang Y."/>
            <person name="Lindpaintner K."/>
            <person name="Andrews T.D."/>
            <person name="Caccamo M."/>
            <person name="Clamp M."/>
            <person name="Clarke L."/>
            <person name="Curwen V."/>
            <person name="Durbin R.M."/>
            <person name="Eyras E."/>
            <person name="Searle S.M."/>
            <person name="Cooper G.M."/>
            <person name="Batzoglou S."/>
            <person name="Brudno M."/>
            <person name="Sidow A."/>
            <person name="Stone E.A."/>
            <person name="Payseur B.A."/>
            <person name="Bourque G."/>
            <person name="Lopez-Otin C."/>
            <person name="Puente X.S."/>
            <person name="Chakrabarti K."/>
            <person name="Chatterji S."/>
            <person name="Dewey C."/>
            <person name="Pachter L."/>
            <person name="Bray N."/>
            <person name="Yap V.B."/>
            <person name="Caspi A."/>
            <person name="Tesler G."/>
            <person name="Pevzner P.A."/>
            <person name="Haussler D."/>
            <person name="Roskin K.M."/>
            <person name="Baertsch R."/>
            <person name="Clawson H."/>
            <person name="Furey T.S."/>
            <person name="Hinrichs A.S."/>
            <person name="Karolchik D."/>
            <person name="Kent W.J."/>
            <person name="Rosenbloom K.R."/>
            <person name="Trumbower H."/>
            <person name="Weirauch M."/>
            <person name="Cooper D.N."/>
            <person name="Stenson P.D."/>
            <person name="Ma B."/>
            <person name="Brent M."/>
            <person name="Arumugam M."/>
            <person name="Shteynberg D."/>
            <person name="Copley R.R."/>
            <person name="Taylor M.S."/>
            <person name="Riethman H."/>
            <person name="Mudunuri U."/>
            <person name="Peterson J."/>
            <person name="Guyer M."/>
            <person name="Felsenfeld A."/>
            <person name="Old S."/>
            <person name="Mockrin S."/>
            <person name="Collins F.S."/>
        </authorList>
    </citation>
    <scope>NUCLEOTIDE SEQUENCE [LARGE SCALE GENOMIC DNA]</scope>
    <source>
        <strain>Brown Norway</strain>
    </source>
</reference>
<reference key="2">
    <citation type="journal article" date="2010" name="Endocrinology">
        <title>A locus on mouse chromosome 2 is involved in susceptibility to congenital hypothyroidism and contains an essential gene expressed in thyroid.</title>
        <authorList>
            <person name="Amendola E."/>
            <person name="Sanges R."/>
            <person name="Galvan A."/>
            <person name="Dathan N."/>
            <person name="Manenti G."/>
            <person name="Ferrandino G."/>
            <person name="Alvino F.M."/>
            <person name="Di Palma T."/>
            <person name="Scarfo M."/>
            <person name="Zannini M."/>
            <person name="Dragani T.A."/>
            <person name="De Felice M."/>
            <person name="Di Lauro R."/>
        </authorList>
    </citation>
    <scope>SUBCELLULAR LOCATION</scope>
</reference>
<proteinExistence type="inferred from homology"/>
<sequence>MAVTKELLQMDLYALLGIEEKAADKEVKKAYRQKALSCHPDKNPDNPRAAELFHQLSQALEVLTDAAARAAYDKVRKARKQAAERTQRLDEKRKKVKLDLEARERQAQAQGTEEEEESRSTTTLEQEIARLREEGSRQLEEQQRLIQEQIRQDREQRLRGRTENTEGKGTPKLKLKWKCKKEDESQGGYSRDILLRLLQKYGEVLNLVLSKKKAGNAIVEFATVRAAELAVRNEVGLADNPLKVSWLEGQPQGTVDPSPPGLSKGSVLSERDYESLVMMRMRQAAERQQLIAQMQQEDEGRPT</sequence>
<accession>D3ZSC8</accession>